<comment type="function">
    <text evidence="1">Probable transcription factor.</text>
</comment>
<comment type="subcellular location">
    <subcellularLocation>
        <location evidence="2">Nucleus</location>
    </subcellularLocation>
</comment>
<dbReference type="EMBL" id="DP000009">
    <property type="protein sequence ID" value="ABF93809.1"/>
    <property type="molecule type" value="Genomic_DNA"/>
</dbReference>
<dbReference type="EMBL" id="AP008209">
    <property type="protein sequence ID" value="BAF10774.1"/>
    <property type="molecule type" value="Genomic_DNA"/>
</dbReference>
<dbReference type="EMBL" id="AP014959">
    <property type="protein sequence ID" value="BAS82137.1"/>
    <property type="molecule type" value="Genomic_DNA"/>
</dbReference>
<dbReference type="EMBL" id="CM000140">
    <property type="protein sequence ID" value="EAZ25469.1"/>
    <property type="molecule type" value="Genomic_DNA"/>
</dbReference>
<dbReference type="EMBL" id="AK100046">
    <property type="status" value="NOT_ANNOTATED_CDS"/>
    <property type="molecule type" value="mRNA"/>
</dbReference>
<dbReference type="RefSeq" id="XP_015629744.1">
    <property type="nucleotide sequence ID" value="XM_015774258.1"/>
</dbReference>
<dbReference type="RefSeq" id="XP_015629745.1">
    <property type="nucleotide sequence ID" value="XM_015774259.1"/>
</dbReference>
<dbReference type="SMR" id="Q10S83"/>
<dbReference type="FunCoup" id="Q10S83">
    <property type="interactions" value="1004"/>
</dbReference>
<dbReference type="STRING" id="39947.Q10S83"/>
<dbReference type="PaxDb" id="39947-Q10S83"/>
<dbReference type="EnsemblPlants" id="Os03t0131100-01">
    <property type="protein sequence ID" value="Os03t0131100-01"/>
    <property type="gene ID" value="Os03g0131100"/>
</dbReference>
<dbReference type="GeneID" id="4331508"/>
<dbReference type="Gramene" id="Os03t0131100-01">
    <property type="protein sequence ID" value="Os03t0131100-01"/>
    <property type="gene ID" value="Os03g0131100"/>
</dbReference>
<dbReference type="KEGG" id="dosa:Os03g0131100"/>
<dbReference type="KEGG" id="osa:4331508"/>
<dbReference type="eggNOG" id="ENOG502QRI2">
    <property type="taxonomic scope" value="Eukaryota"/>
</dbReference>
<dbReference type="HOGENOM" id="CLU_008971_0_0_1"/>
<dbReference type="InParanoid" id="Q10S83"/>
<dbReference type="OMA" id="MENMSGM"/>
<dbReference type="OrthoDB" id="6270329at2759"/>
<dbReference type="Proteomes" id="UP000000763">
    <property type="component" value="Chromosome 3"/>
</dbReference>
<dbReference type="Proteomes" id="UP000007752">
    <property type="component" value="Chromosome 3"/>
</dbReference>
<dbReference type="Proteomes" id="UP000059680">
    <property type="component" value="Chromosome 3"/>
</dbReference>
<dbReference type="GO" id="GO:0005634">
    <property type="term" value="C:nucleus"/>
    <property type="evidence" value="ECO:0007669"/>
    <property type="project" value="UniProtKB-SubCell"/>
</dbReference>
<dbReference type="GO" id="GO:0003677">
    <property type="term" value="F:DNA binding"/>
    <property type="evidence" value="ECO:0007669"/>
    <property type="project" value="UniProtKB-KW"/>
</dbReference>
<dbReference type="GO" id="GO:0003700">
    <property type="term" value="F:DNA-binding transcription factor activity"/>
    <property type="evidence" value="ECO:0007669"/>
    <property type="project" value="InterPro"/>
</dbReference>
<dbReference type="CDD" id="cd06407">
    <property type="entry name" value="PB1_NLP"/>
    <property type="match status" value="1"/>
</dbReference>
<dbReference type="Gene3D" id="3.10.20.90">
    <property type="entry name" value="Phosphatidylinositol 3-kinase Catalytic Subunit, Chain A, domain 1"/>
    <property type="match status" value="1"/>
</dbReference>
<dbReference type="InterPro" id="IPR045012">
    <property type="entry name" value="NLP"/>
</dbReference>
<dbReference type="InterPro" id="IPR055081">
    <property type="entry name" value="NLP1-9_GAF"/>
</dbReference>
<dbReference type="InterPro" id="IPR053793">
    <property type="entry name" value="PB1-like"/>
</dbReference>
<dbReference type="InterPro" id="IPR000270">
    <property type="entry name" value="PB1_dom"/>
</dbReference>
<dbReference type="InterPro" id="IPR034891">
    <property type="entry name" value="PB1_NLP"/>
</dbReference>
<dbReference type="InterPro" id="IPR003035">
    <property type="entry name" value="RWP-RK_dom"/>
</dbReference>
<dbReference type="PANTHER" id="PTHR32002:SF44">
    <property type="entry name" value="PROTEIN NLP4"/>
    <property type="match status" value="1"/>
</dbReference>
<dbReference type="PANTHER" id="PTHR32002">
    <property type="entry name" value="PROTEIN NLP8"/>
    <property type="match status" value="1"/>
</dbReference>
<dbReference type="Pfam" id="PF22922">
    <property type="entry name" value="GAF_NLP"/>
    <property type="match status" value="2"/>
</dbReference>
<dbReference type="Pfam" id="PF00564">
    <property type="entry name" value="PB1"/>
    <property type="match status" value="1"/>
</dbReference>
<dbReference type="Pfam" id="PF02042">
    <property type="entry name" value="RWP-RK"/>
    <property type="match status" value="1"/>
</dbReference>
<dbReference type="SMART" id="SM00666">
    <property type="entry name" value="PB1"/>
    <property type="match status" value="1"/>
</dbReference>
<dbReference type="SUPFAM" id="SSF54277">
    <property type="entry name" value="CAD &amp; PB1 domains"/>
    <property type="match status" value="1"/>
</dbReference>
<dbReference type="PROSITE" id="PS51745">
    <property type="entry name" value="PB1"/>
    <property type="match status" value="1"/>
</dbReference>
<dbReference type="PROSITE" id="PS51519">
    <property type="entry name" value="RWP_RK"/>
    <property type="match status" value="1"/>
</dbReference>
<accession>Q10S83</accession>
<accession>A0A0N7KGI8</accession>
<accession>A3ADT0</accession>
<protein>
    <recommendedName>
        <fullName>Protein NLP1</fullName>
        <shortName>OsNLP1</shortName>
    </recommendedName>
    <alternativeName>
        <fullName>NIN-like protein 1</fullName>
    </alternativeName>
    <alternativeName>
        <fullName>Nodule inception protein-like protein 1</fullName>
    </alternativeName>
</protein>
<gene>
    <name type="primary">NLP1</name>
    <name type="ordered locus">Os03g0131100</name>
    <name type="ordered locus">LOC_Os03g03900</name>
    <name type="ORF">OJ1004C08.16</name>
    <name type="ORF">OsJ_09292</name>
</gene>
<feature type="chain" id="PRO_0000401500" description="Protein NLP1">
    <location>
        <begin position="1"/>
        <end position="942"/>
    </location>
</feature>
<feature type="domain" description="RWP-RK" evidence="2">
    <location>
        <begin position="609"/>
        <end position="690"/>
    </location>
</feature>
<feature type="domain" description="PB1" evidence="3">
    <location>
        <begin position="844"/>
        <end position="927"/>
    </location>
</feature>
<feature type="region of interest" description="Disordered" evidence="4">
    <location>
        <begin position="1"/>
        <end position="32"/>
    </location>
</feature>
<feature type="region of interest" description="Disordered" evidence="4">
    <location>
        <begin position="77"/>
        <end position="106"/>
    </location>
</feature>
<feature type="region of interest" description="Disordered" evidence="4">
    <location>
        <begin position="594"/>
        <end position="620"/>
    </location>
</feature>
<feature type="region of interest" description="Disordered" evidence="4">
    <location>
        <begin position="723"/>
        <end position="753"/>
    </location>
</feature>
<feature type="region of interest" description="Disordered" evidence="4">
    <location>
        <begin position="759"/>
        <end position="778"/>
    </location>
</feature>
<feature type="compositionally biased region" description="Pro residues" evidence="4">
    <location>
        <begin position="1"/>
        <end position="11"/>
    </location>
</feature>
<feature type="compositionally biased region" description="Gly residues" evidence="4">
    <location>
        <begin position="21"/>
        <end position="32"/>
    </location>
</feature>
<feature type="compositionally biased region" description="Polar residues" evidence="4">
    <location>
        <begin position="597"/>
        <end position="609"/>
    </location>
</feature>
<feature type="compositionally biased region" description="Low complexity" evidence="4">
    <location>
        <begin position="743"/>
        <end position="753"/>
    </location>
</feature>
<feature type="compositionally biased region" description="Polar residues" evidence="4">
    <location>
        <begin position="765"/>
        <end position="774"/>
    </location>
</feature>
<feature type="sequence conflict" description="In Ref. 6; AK100046." evidence="5" ref="6">
    <original>E</original>
    <variation>G</variation>
    <location>
        <position position="41"/>
    </location>
</feature>
<feature type="sequence conflict" description="In Ref. 5; EAZ25469." evidence="5" ref="5">
    <original>V</original>
    <variation>L</variation>
    <location>
        <position position="121"/>
    </location>
</feature>
<feature type="sequence conflict" description="In Ref. 6; AK100046." evidence="5" ref="6">
    <original>Q</original>
    <variation>K</variation>
    <location>
        <position position="181"/>
    </location>
</feature>
<sequence>MEQKPSPPPPPRSDEEEDGLMGCGMGGTGDIAGGDLDLMEEFLLATPGFDLSEFWHPGAASPFSPLFDIGSSVTTLTTPAPAAGEDDRDEAEMPSRGGGGLEVSPAHRGWTFQTAPQEVAVEPTVKERLRRALERIASQSQSQAQRGDGELLVQVWVPTRIGDRQVLTTCGQPFWLDRRNQRLANYRTVSMKYQFSADESARADLGLPGRVFVGRVPEWTPDVRYFSTEEYPRVQHAQYFDIRGSVALPVFEPRSRACLGVVELVMTTQKVNYSAEIENICNALKEVDLRSSDVSSDPRSKVVDASYRAIIPEIMDVLRAVCDTHNLPLAQTWIPCICQAKRGSRHSDESYKHCVSTVDEACYVRDCSVLGFHQACSEHHLFRGEGVVGRAFGTNEPCFSPDITTYSKTQYPLSHHAKLFGLRAAVAIQLRSVKTGSLDFVLEFFLPMKCINTEEQRAMLNSLSNTIQQVCYTLRVVKPKELVNDGPFEISQPTRPEFYAKSVHEDLDELCSGINVPGRTTSLEASEEVSSWIASLVDAQNKGGKGEIDVDLPFGFSKQDDEGFSVTAGWHTSPVMAPDGSMFSGFKRHEDYDVKENTCSSDPSNSNSDKAVEKRRTKTEKTVSLQDLRKHFAGSLKEAAKNLGVCPTTLKRICRQHGINRWPSRKIKKVGHSLKKLQMVIDSVHGPEGTVQLSSLYENFTKTTWSERELQGDVHFPASEQNFQLEPSVPDRPCEGRFTSHTSGSNSISPSCSQSSNSSLGCSSVPKTQQQHGSAPQLAVKEEISMDENQCSTLIKSASHAEAELQMFVEERPTMLFRSQSQVLLSEHKPIENMSNVQKARSDSLKIKAIYGEERCIFRLQPSWGFQRLKEEIVKRFGISQDTHVDLKYLDDESEWVLLTCDADLLECIDVYKSSSNQTVRILVNPSIQPLLNASFGQTGLS</sequence>
<proteinExistence type="evidence at transcript level"/>
<keyword id="KW-0238">DNA-binding</keyword>
<keyword id="KW-0539">Nucleus</keyword>
<keyword id="KW-1185">Reference proteome</keyword>
<keyword id="KW-0804">Transcription</keyword>
<keyword id="KW-0805">Transcription regulation</keyword>
<organism>
    <name type="scientific">Oryza sativa subsp. japonica</name>
    <name type="common">Rice</name>
    <dbReference type="NCBI Taxonomy" id="39947"/>
    <lineage>
        <taxon>Eukaryota</taxon>
        <taxon>Viridiplantae</taxon>
        <taxon>Streptophyta</taxon>
        <taxon>Embryophyta</taxon>
        <taxon>Tracheophyta</taxon>
        <taxon>Spermatophyta</taxon>
        <taxon>Magnoliopsida</taxon>
        <taxon>Liliopsida</taxon>
        <taxon>Poales</taxon>
        <taxon>Poaceae</taxon>
        <taxon>BOP clade</taxon>
        <taxon>Oryzoideae</taxon>
        <taxon>Oryzeae</taxon>
        <taxon>Oryzinae</taxon>
        <taxon>Oryza</taxon>
        <taxon>Oryza sativa</taxon>
    </lineage>
</organism>
<reference key="1">
    <citation type="journal article" date="2005" name="Genome Res.">
        <title>Sequence, annotation, and analysis of synteny between rice chromosome 3 and diverged grass species.</title>
        <authorList>
            <consortium name="The rice chromosome 3 sequencing consortium"/>
            <person name="Buell C.R."/>
            <person name="Yuan Q."/>
            <person name="Ouyang S."/>
            <person name="Liu J."/>
            <person name="Zhu W."/>
            <person name="Wang A."/>
            <person name="Maiti R."/>
            <person name="Haas B."/>
            <person name="Wortman J."/>
            <person name="Pertea M."/>
            <person name="Jones K.M."/>
            <person name="Kim M."/>
            <person name="Overton L."/>
            <person name="Tsitrin T."/>
            <person name="Fadrosh D."/>
            <person name="Bera J."/>
            <person name="Weaver B."/>
            <person name="Jin S."/>
            <person name="Johri S."/>
            <person name="Reardon M."/>
            <person name="Webb K."/>
            <person name="Hill J."/>
            <person name="Moffat K."/>
            <person name="Tallon L."/>
            <person name="Van Aken S."/>
            <person name="Lewis M."/>
            <person name="Utterback T."/>
            <person name="Feldblyum T."/>
            <person name="Zismann V."/>
            <person name="Iobst S."/>
            <person name="Hsiao J."/>
            <person name="de Vazeille A.R."/>
            <person name="Salzberg S.L."/>
            <person name="White O."/>
            <person name="Fraser C.M."/>
            <person name="Yu Y."/>
            <person name="Kim H."/>
            <person name="Rambo T."/>
            <person name="Currie J."/>
            <person name="Collura K."/>
            <person name="Kernodle-Thompson S."/>
            <person name="Wei F."/>
            <person name="Kudrna K."/>
            <person name="Ammiraju J.S.S."/>
            <person name="Luo M."/>
            <person name="Goicoechea J.L."/>
            <person name="Wing R.A."/>
            <person name="Henry D."/>
            <person name="Oates R."/>
            <person name="Palmer M."/>
            <person name="Pries G."/>
            <person name="Saski C."/>
            <person name="Simmons J."/>
            <person name="Soderlund C."/>
            <person name="Nelson W."/>
            <person name="de la Bastide M."/>
            <person name="Spiegel L."/>
            <person name="Nascimento L."/>
            <person name="Huang E."/>
            <person name="Preston R."/>
            <person name="Zutavern T."/>
            <person name="Palmer L."/>
            <person name="O'Shaughnessy A."/>
            <person name="Dike S."/>
            <person name="McCombie W.R."/>
            <person name="Minx P."/>
            <person name="Cordum H."/>
            <person name="Wilson R."/>
            <person name="Jin W."/>
            <person name="Lee H.R."/>
            <person name="Jiang J."/>
            <person name="Jackson S."/>
        </authorList>
    </citation>
    <scope>NUCLEOTIDE SEQUENCE [LARGE SCALE GENOMIC DNA]</scope>
    <source>
        <strain>cv. Nipponbare</strain>
    </source>
</reference>
<reference key="2">
    <citation type="journal article" date="2005" name="Nature">
        <title>The map-based sequence of the rice genome.</title>
        <authorList>
            <consortium name="International rice genome sequencing project (IRGSP)"/>
        </authorList>
    </citation>
    <scope>NUCLEOTIDE SEQUENCE [LARGE SCALE GENOMIC DNA]</scope>
    <source>
        <strain>cv. Nipponbare</strain>
    </source>
</reference>
<reference key="3">
    <citation type="journal article" date="2008" name="Nucleic Acids Res.">
        <title>The rice annotation project database (RAP-DB): 2008 update.</title>
        <authorList>
            <consortium name="The rice annotation project (RAP)"/>
        </authorList>
    </citation>
    <scope>GENOME REANNOTATION</scope>
    <source>
        <strain>cv. Nipponbare</strain>
    </source>
</reference>
<reference key="4">
    <citation type="journal article" date="2013" name="Rice">
        <title>Improvement of the Oryza sativa Nipponbare reference genome using next generation sequence and optical map data.</title>
        <authorList>
            <person name="Kawahara Y."/>
            <person name="de la Bastide M."/>
            <person name="Hamilton J.P."/>
            <person name="Kanamori H."/>
            <person name="McCombie W.R."/>
            <person name="Ouyang S."/>
            <person name="Schwartz D.C."/>
            <person name="Tanaka T."/>
            <person name="Wu J."/>
            <person name="Zhou S."/>
            <person name="Childs K.L."/>
            <person name="Davidson R.M."/>
            <person name="Lin H."/>
            <person name="Quesada-Ocampo L."/>
            <person name="Vaillancourt B."/>
            <person name="Sakai H."/>
            <person name="Lee S.S."/>
            <person name="Kim J."/>
            <person name="Numa H."/>
            <person name="Itoh T."/>
            <person name="Buell C.R."/>
            <person name="Matsumoto T."/>
        </authorList>
    </citation>
    <scope>GENOME REANNOTATION</scope>
    <source>
        <strain>cv. Nipponbare</strain>
    </source>
</reference>
<reference key="5">
    <citation type="journal article" date="2005" name="PLoS Biol.">
        <title>The genomes of Oryza sativa: a history of duplications.</title>
        <authorList>
            <person name="Yu J."/>
            <person name="Wang J."/>
            <person name="Lin W."/>
            <person name="Li S."/>
            <person name="Li H."/>
            <person name="Zhou J."/>
            <person name="Ni P."/>
            <person name="Dong W."/>
            <person name="Hu S."/>
            <person name="Zeng C."/>
            <person name="Zhang J."/>
            <person name="Zhang Y."/>
            <person name="Li R."/>
            <person name="Xu Z."/>
            <person name="Li S."/>
            <person name="Li X."/>
            <person name="Zheng H."/>
            <person name="Cong L."/>
            <person name="Lin L."/>
            <person name="Yin J."/>
            <person name="Geng J."/>
            <person name="Li G."/>
            <person name="Shi J."/>
            <person name="Liu J."/>
            <person name="Lv H."/>
            <person name="Li J."/>
            <person name="Wang J."/>
            <person name="Deng Y."/>
            <person name="Ran L."/>
            <person name="Shi X."/>
            <person name="Wang X."/>
            <person name="Wu Q."/>
            <person name="Li C."/>
            <person name="Ren X."/>
            <person name="Wang J."/>
            <person name="Wang X."/>
            <person name="Li D."/>
            <person name="Liu D."/>
            <person name="Zhang X."/>
            <person name="Ji Z."/>
            <person name="Zhao W."/>
            <person name="Sun Y."/>
            <person name="Zhang Z."/>
            <person name="Bao J."/>
            <person name="Han Y."/>
            <person name="Dong L."/>
            <person name="Ji J."/>
            <person name="Chen P."/>
            <person name="Wu S."/>
            <person name="Liu J."/>
            <person name="Xiao Y."/>
            <person name="Bu D."/>
            <person name="Tan J."/>
            <person name="Yang L."/>
            <person name="Ye C."/>
            <person name="Zhang J."/>
            <person name="Xu J."/>
            <person name="Zhou Y."/>
            <person name="Yu Y."/>
            <person name="Zhang B."/>
            <person name="Zhuang S."/>
            <person name="Wei H."/>
            <person name="Liu B."/>
            <person name="Lei M."/>
            <person name="Yu H."/>
            <person name="Li Y."/>
            <person name="Xu H."/>
            <person name="Wei S."/>
            <person name="He X."/>
            <person name="Fang L."/>
            <person name="Zhang Z."/>
            <person name="Zhang Y."/>
            <person name="Huang X."/>
            <person name="Su Z."/>
            <person name="Tong W."/>
            <person name="Li J."/>
            <person name="Tong Z."/>
            <person name="Li S."/>
            <person name="Ye J."/>
            <person name="Wang L."/>
            <person name="Fang L."/>
            <person name="Lei T."/>
            <person name="Chen C.-S."/>
            <person name="Chen H.-C."/>
            <person name="Xu Z."/>
            <person name="Li H."/>
            <person name="Huang H."/>
            <person name="Zhang F."/>
            <person name="Xu H."/>
            <person name="Li N."/>
            <person name="Zhao C."/>
            <person name="Li S."/>
            <person name="Dong L."/>
            <person name="Huang Y."/>
            <person name="Li L."/>
            <person name="Xi Y."/>
            <person name="Qi Q."/>
            <person name="Li W."/>
            <person name="Zhang B."/>
            <person name="Hu W."/>
            <person name="Zhang Y."/>
            <person name="Tian X."/>
            <person name="Jiao Y."/>
            <person name="Liang X."/>
            <person name="Jin J."/>
            <person name="Gao L."/>
            <person name="Zheng W."/>
            <person name="Hao B."/>
            <person name="Liu S.-M."/>
            <person name="Wang W."/>
            <person name="Yuan L."/>
            <person name="Cao M."/>
            <person name="McDermott J."/>
            <person name="Samudrala R."/>
            <person name="Wang J."/>
            <person name="Wong G.K.-S."/>
            <person name="Yang H."/>
        </authorList>
    </citation>
    <scope>NUCLEOTIDE SEQUENCE [LARGE SCALE GENOMIC DNA]</scope>
    <source>
        <strain>cv. Nipponbare</strain>
    </source>
</reference>
<reference key="6">
    <citation type="journal article" date="2003" name="Science">
        <title>Collection, mapping, and annotation of over 28,000 cDNA clones from japonica rice.</title>
        <authorList>
            <consortium name="The rice full-length cDNA consortium"/>
        </authorList>
    </citation>
    <scope>NUCLEOTIDE SEQUENCE [LARGE SCALE MRNA]</scope>
    <source>
        <strain>cv. Nipponbare</strain>
    </source>
</reference>
<reference key="7">
    <citation type="journal article" date="2005" name="J. Mol. Evol.">
        <title>Evolution of NIN-like proteins in Arabidopsis, rice, and Lotus japonicus.</title>
        <authorList>
            <person name="Schauser L."/>
            <person name="Wieloch W."/>
            <person name="Stougaard J."/>
        </authorList>
    </citation>
    <scope>GENE FAMILY</scope>
    <scope>NOMENCLATURE</scope>
</reference>
<name>NLP1_ORYSJ</name>
<evidence type="ECO:0000250" key="1"/>
<evidence type="ECO:0000255" key="2">
    <source>
        <dbReference type="PROSITE-ProRule" id="PRU00852"/>
    </source>
</evidence>
<evidence type="ECO:0000255" key="3">
    <source>
        <dbReference type="PROSITE-ProRule" id="PRU01081"/>
    </source>
</evidence>
<evidence type="ECO:0000256" key="4">
    <source>
        <dbReference type="SAM" id="MobiDB-lite"/>
    </source>
</evidence>
<evidence type="ECO:0000305" key="5"/>